<comment type="function">
    <text evidence="1">Peptide chain release factor 1 directs the termination of translation in response to the peptide chain termination codons UAG and UAA.</text>
</comment>
<comment type="subcellular location">
    <subcellularLocation>
        <location evidence="1">Cytoplasm</location>
    </subcellularLocation>
</comment>
<comment type="PTM">
    <text evidence="1">Methylated by PrmC. Methylation increases the termination efficiency of RF1.</text>
</comment>
<comment type="similarity">
    <text evidence="1">Belongs to the prokaryotic/mitochondrial release factor family.</text>
</comment>
<gene>
    <name evidence="1" type="primary">prfA</name>
    <name type="ordered locus">MARTH_orf295</name>
</gene>
<evidence type="ECO:0000255" key="1">
    <source>
        <dbReference type="HAMAP-Rule" id="MF_00093"/>
    </source>
</evidence>
<keyword id="KW-0963">Cytoplasm</keyword>
<keyword id="KW-0488">Methylation</keyword>
<keyword id="KW-0648">Protein biosynthesis</keyword>
<keyword id="KW-1185">Reference proteome</keyword>
<proteinExistence type="inferred from homology"/>
<sequence length="355" mass="40235">MYTSLISIKEKYELLAQELTKLEIFNDIKKYTKIQKEHASIEDIAIAFINYLAAESSYNLSKEILQNEKDEELIALAKEDIDEQSTLMQKLEQELKELLLPQDENDNKNVIMEIRGAAGGDEGDIFSGDLFKMYQKFCEANDFKIKIVDSVYGTAGGYSRIVFIVKGEKVFSKLKFERGVHRVQRVPQTETQGRVHTSTATVTVLPEVDDDVKIEIRPEDIEVDVFRSSGAGGQSVNTTDSAVRITHKKTGIIVTSQDERSQIMNRETALKILKAKLYEIEVKKREEEEQGLRKLAGTGDRSEKIRTYNYPQDRITDHRIGFSLSLKNVMEGNLDKIIDALIADEKALKIKAAGF</sequence>
<organism>
    <name type="scientific">Metamycoplasma arthritidis (strain 158L3-1)</name>
    <name type="common">Mycoplasma arthritidis</name>
    <dbReference type="NCBI Taxonomy" id="243272"/>
    <lineage>
        <taxon>Bacteria</taxon>
        <taxon>Bacillati</taxon>
        <taxon>Mycoplasmatota</taxon>
        <taxon>Mycoplasmoidales</taxon>
        <taxon>Metamycoplasmataceae</taxon>
        <taxon>Metamycoplasma</taxon>
    </lineage>
</organism>
<accession>B3PMD5</accession>
<dbReference type="EMBL" id="CP001047">
    <property type="protein sequence ID" value="ACF07187.1"/>
    <property type="molecule type" value="Genomic_DNA"/>
</dbReference>
<dbReference type="SMR" id="B3PMD5"/>
<dbReference type="STRING" id="243272.MARTH_orf295"/>
<dbReference type="KEGG" id="mat:MARTH_orf295"/>
<dbReference type="eggNOG" id="COG0216">
    <property type="taxonomic scope" value="Bacteria"/>
</dbReference>
<dbReference type="HOGENOM" id="CLU_036856_0_1_14"/>
<dbReference type="Proteomes" id="UP000008812">
    <property type="component" value="Chromosome"/>
</dbReference>
<dbReference type="GO" id="GO:0005737">
    <property type="term" value="C:cytoplasm"/>
    <property type="evidence" value="ECO:0007669"/>
    <property type="project" value="UniProtKB-SubCell"/>
</dbReference>
<dbReference type="GO" id="GO:0016149">
    <property type="term" value="F:translation release factor activity, codon specific"/>
    <property type="evidence" value="ECO:0007669"/>
    <property type="project" value="UniProtKB-UniRule"/>
</dbReference>
<dbReference type="FunFam" id="3.30.160.20:FF:000004">
    <property type="entry name" value="Peptide chain release factor 1"/>
    <property type="match status" value="1"/>
</dbReference>
<dbReference type="FunFam" id="3.30.70.1660:FF:000002">
    <property type="entry name" value="Peptide chain release factor 1"/>
    <property type="match status" value="1"/>
</dbReference>
<dbReference type="Gene3D" id="3.30.160.20">
    <property type="match status" value="1"/>
</dbReference>
<dbReference type="Gene3D" id="3.30.70.1660">
    <property type="match status" value="1"/>
</dbReference>
<dbReference type="Gene3D" id="6.10.140.1950">
    <property type="match status" value="1"/>
</dbReference>
<dbReference type="HAMAP" id="MF_00093">
    <property type="entry name" value="Rel_fac_1"/>
    <property type="match status" value="1"/>
</dbReference>
<dbReference type="InterPro" id="IPR005139">
    <property type="entry name" value="PCRF"/>
</dbReference>
<dbReference type="InterPro" id="IPR000352">
    <property type="entry name" value="Pep_chain_release_fac_I"/>
</dbReference>
<dbReference type="InterPro" id="IPR045853">
    <property type="entry name" value="Pep_chain_release_fac_I_sf"/>
</dbReference>
<dbReference type="InterPro" id="IPR050057">
    <property type="entry name" value="Prokaryotic/Mito_RF"/>
</dbReference>
<dbReference type="InterPro" id="IPR004373">
    <property type="entry name" value="RF-1"/>
</dbReference>
<dbReference type="NCBIfam" id="TIGR00019">
    <property type="entry name" value="prfA"/>
    <property type="match status" value="1"/>
</dbReference>
<dbReference type="NCBIfam" id="NF001859">
    <property type="entry name" value="PRK00591.1"/>
    <property type="match status" value="1"/>
</dbReference>
<dbReference type="PANTHER" id="PTHR43804">
    <property type="entry name" value="LD18447P"/>
    <property type="match status" value="1"/>
</dbReference>
<dbReference type="PANTHER" id="PTHR43804:SF7">
    <property type="entry name" value="LD18447P"/>
    <property type="match status" value="1"/>
</dbReference>
<dbReference type="Pfam" id="PF03462">
    <property type="entry name" value="PCRF"/>
    <property type="match status" value="1"/>
</dbReference>
<dbReference type="Pfam" id="PF00472">
    <property type="entry name" value="RF-1"/>
    <property type="match status" value="1"/>
</dbReference>
<dbReference type="SMART" id="SM00937">
    <property type="entry name" value="PCRF"/>
    <property type="match status" value="1"/>
</dbReference>
<dbReference type="SUPFAM" id="SSF75620">
    <property type="entry name" value="Release factor"/>
    <property type="match status" value="1"/>
</dbReference>
<dbReference type="PROSITE" id="PS00745">
    <property type="entry name" value="RF_PROK_I"/>
    <property type="match status" value="1"/>
</dbReference>
<protein>
    <recommendedName>
        <fullName evidence="1">Peptide chain release factor 1</fullName>
        <shortName evidence="1">RF-1</shortName>
    </recommendedName>
</protein>
<name>RF1_META1</name>
<reference key="1">
    <citation type="journal article" date="2008" name="Infect. Immun.">
        <title>Genome of Mycoplasma arthritidis.</title>
        <authorList>
            <person name="Dybvig K."/>
            <person name="Zuhua C."/>
            <person name="Lao P."/>
            <person name="Jordan D.S."/>
            <person name="French C.T."/>
            <person name="Tu A.H."/>
            <person name="Loraine A.E."/>
        </authorList>
    </citation>
    <scope>NUCLEOTIDE SEQUENCE [LARGE SCALE GENOMIC DNA]</scope>
    <source>
        <strain>158L3-1</strain>
    </source>
</reference>
<feature type="chain" id="PRO_1000117249" description="Peptide chain release factor 1">
    <location>
        <begin position="1"/>
        <end position="355"/>
    </location>
</feature>
<feature type="modified residue" description="N5-methylglutamine" evidence="1">
    <location>
        <position position="234"/>
    </location>
</feature>